<sequence>MFPFGQKGQKIKGTMVVMQKNVLDINSITSVGGIVDQGLGFIGSAVDALTFAATKISIQLISATKADGGKGKIGKSTNLRGKITLPTLGAGEQAYDVNFEWDSDFGIPGAFYIKNFMQNEFYLKSLILEDIPNHGTIHFVCNSWVYNSKNYKTDRIFFANNTYLPSETPAPLLKYREEELKNVRGDGTGERKEWDRIYDYDVYNDLGNPDSGDKYARPVLGGSALPYPRRERTGRGKTRKDPNSEKPSDFVYLPRDEAFGHLKSSDFLAYGIKSVSQDVLPVLTDAFDGNILSLEFDNFAEVHKLYEGGVTLPTNFLSKIAPIPVIKEIFRTDGEQFLKYPPPKVMQVDKSAWMTDEEFARETIAGLNPNVIKIIEEFPLSSKLDTQAYGDHTCIIAKEHLEPNLGGLTVEQAIQNKKLFILDHHDYLIPYLRKINANTTKTYATRTIFFLKDDGTLTPLAIELSKPHPQGEEYGPVSEVYVPASEGVEAYIWLLAKAYVVVNDACYHQIISHWLSTHAIVEPFVIATNRQLSVVHPIYKLLFPHYRDTMNINSLARKALVNADGIIEKTFLWGRYSMEMSAVIYKDWVFTDQALPNDLVKRGVAVKDPSAPHGVRLLIEDYPYASDGLEIWDAIKSWVQEYVSFYYKSDEELQKDPELQAWWKELVEVGHGDLKDKPWWQKMQTREELVEASAILIWIASALHAAVNFGQYPYGGLILNRPTISRRFMPEKGSPEYDALAKNPEKEFLKTITGKKETLIDLTVIEILSRHASDEFYLGQRDGGDYWTSDAGPLEAFKRFGKKLEEIEKKLIEKNKDETLRNRYGPAKMPYTLLYPSSEEGLTFRGIPNSISI</sequence>
<accession>P38417</accession>
<protein>
    <recommendedName>
        <fullName>Linoleate 9S-lipoxygenase-4</fullName>
        <ecNumber>1.13.11.58</ecNumber>
    </recommendedName>
    <alternativeName>
        <fullName>Lipoxygenase-4</fullName>
        <shortName>L-4</shortName>
    </alternativeName>
    <alternativeName>
        <fullName>VSP94</fullName>
    </alternativeName>
</protein>
<keyword id="KW-0963">Cytoplasm</keyword>
<keyword id="KW-0223">Dioxygenase</keyword>
<keyword id="KW-0903">Direct protein sequencing</keyword>
<keyword id="KW-0275">Fatty acid biosynthesis</keyword>
<keyword id="KW-0276">Fatty acid metabolism</keyword>
<keyword id="KW-0408">Iron</keyword>
<keyword id="KW-0444">Lipid biosynthesis</keyword>
<keyword id="KW-0443">Lipid metabolism</keyword>
<keyword id="KW-0479">Metal-binding</keyword>
<keyword id="KW-0560">Oxidoreductase</keyword>
<keyword id="KW-0925">Oxylipin biosynthesis</keyword>
<keyword id="KW-1185">Reference proteome</keyword>
<organism>
    <name type="scientific">Glycine max</name>
    <name type="common">Soybean</name>
    <name type="synonym">Glycine hispida</name>
    <dbReference type="NCBI Taxonomy" id="3847"/>
    <lineage>
        <taxon>Eukaryota</taxon>
        <taxon>Viridiplantae</taxon>
        <taxon>Streptophyta</taxon>
        <taxon>Embryophyta</taxon>
        <taxon>Tracheophyta</taxon>
        <taxon>Spermatophyta</taxon>
        <taxon>Magnoliopsida</taxon>
        <taxon>eudicotyledons</taxon>
        <taxon>Gunneridae</taxon>
        <taxon>Pentapetalae</taxon>
        <taxon>rosids</taxon>
        <taxon>fabids</taxon>
        <taxon>Fabales</taxon>
        <taxon>Fabaceae</taxon>
        <taxon>Papilionoideae</taxon>
        <taxon>50 kb inversion clade</taxon>
        <taxon>NPAAA clade</taxon>
        <taxon>indigoferoid/millettioid clade</taxon>
        <taxon>Phaseoleae</taxon>
        <taxon>Glycine</taxon>
        <taxon>Glycine subgen. Soja</taxon>
    </lineage>
</organism>
<reference key="1">
    <citation type="journal article" date="1993" name="Plant Cell Physiol.">
        <title>Soybean lipoxygenase L-4, a major component of the 94-kilodalton storage protein in vegetative tissues: expression and accumulation in leaves induced by pod removal and by methyl jasmonate.</title>
        <authorList>
            <person name="Kato T."/>
            <person name="Shirano Y."/>
            <person name="Iwamoto H."/>
            <person name="Shibata D."/>
        </authorList>
    </citation>
    <scope>NUCLEOTIDE SEQUENCE [GENOMIC DNA]</scope>
    <source>
        <strain>cv. Enrei</strain>
    </source>
</reference>
<reference key="2">
    <citation type="journal article" date="1992" name="Plant Physiol.">
        <title>Appearance of new lipoxygenases in soybean cotyledons after germination and evidence for expression of a major new lipoxygenase gene.</title>
        <authorList>
            <person name="Kato T."/>
            <person name="Ohta H."/>
            <person name="Tanaka K."/>
            <person name="Shibata D."/>
        </authorList>
    </citation>
    <scope>PARTIAL PROTEIN SEQUENCE</scope>
    <source>
        <tissue>Cotyledon</tissue>
    </source>
</reference>
<feature type="chain" id="PRO_0000220720" description="Linoleate 9S-lipoxygenase-4">
    <location>
        <begin position="1"/>
        <end position="853"/>
    </location>
</feature>
<feature type="domain" description="PLAT" evidence="1">
    <location>
        <begin position="34"/>
        <end position="159"/>
    </location>
</feature>
<feature type="domain" description="Lipoxygenase" evidence="2">
    <location>
        <begin position="162"/>
        <end position="853"/>
    </location>
</feature>
<feature type="region of interest" description="Disordered" evidence="3">
    <location>
        <begin position="213"/>
        <end position="250"/>
    </location>
</feature>
<feature type="compositionally biased region" description="Basic and acidic residues" evidence="3">
    <location>
        <begin position="228"/>
        <end position="250"/>
    </location>
</feature>
<feature type="binding site" evidence="2">
    <location>
        <position position="513"/>
    </location>
    <ligand>
        <name>Fe cation</name>
        <dbReference type="ChEBI" id="CHEBI:24875"/>
        <note>catalytic</note>
    </ligand>
</feature>
<feature type="binding site" evidence="2">
    <location>
        <position position="518"/>
    </location>
    <ligand>
        <name>Fe cation</name>
        <dbReference type="ChEBI" id="CHEBI:24875"/>
        <note>catalytic</note>
    </ligand>
</feature>
<feature type="binding site" evidence="2">
    <location>
        <position position="704"/>
    </location>
    <ligand>
        <name>Fe cation</name>
        <dbReference type="ChEBI" id="CHEBI:24875"/>
        <note>catalytic</note>
    </ligand>
</feature>
<feature type="binding site" evidence="2">
    <location>
        <position position="708"/>
    </location>
    <ligand>
        <name>Fe cation</name>
        <dbReference type="ChEBI" id="CHEBI:24875"/>
        <note>catalytic</note>
    </ligand>
</feature>
<feature type="binding site" evidence="2">
    <location>
        <position position="853"/>
    </location>
    <ligand>
        <name>Fe cation</name>
        <dbReference type="ChEBI" id="CHEBI:24875"/>
        <note>catalytic</note>
    </ligand>
</feature>
<proteinExistence type="evidence at protein level"/>
<dbReference type="EC" id="1.13.11.58"/>
<dbReference type="EMBL" id="D13999">
    <property type="protein sequence ID" value="BAA03101.1"/>
    <property type="molecule type" value="Genomic_DNA"/>
</dbReference>
<dbReference type="PIR" id="T07662">
    <property type="entry name" value="T07662"/>
</dbReference>
<dbReference type="SMR" id="P38417"/>
<dbReference type="STRING" id="3847.P38417"/>
<dbReference type="BindingDB" id="P38417"/>
<dbReference type="PaxDb" id="3847-GLYMA13G42330.1"/>
<dbReference type="ProMEX" id="P38417"/>
<dbReference type="eggNOG" id="ENOG502QQSP">
    <property type="taxonomic scope" value="Eukaryota"/>
</dbReference>
<dbReference type="InParanoid" id="P38417"/>
<dbReference type="UniPathway" id="UPA00382"/>
<dbReference type="Proteomes" id="UP000008827">
    <property type="component" value="Unplaced"/>
</dbReference>
<dbReference type="GO" id="GO:0005737">
    <property type="term" value="C:cytoplasm"/>
    <property type="evidence" value="ECO:0007669"/>
    <property type="project" value="UniProtKB-SubCell"/>
</dbReference>
<dbReference type="GO" id="GO:1990136">
    <property type="term" value="F:linoleate 9S-lipoxygenase activity"/>
    <property type="evidence" value="ECO:0007669"/>
    <property type="project" value="UniProtKB-EC"/>
</dbReference>
<dbReference type="GO" id="GO:0046872">
    <property type="term" value="F:metal ion binding"/>
    <property type="evidence" value="ECO:0007669"/>
    <property type="project" value="UniProtKB-KW"/>
</dbReference>
<dbReference type="GO" id="GO:0016702">
    <property type="term" value="F:oxidoreductase activity, acting on single donors with incorporation of molecular oxygen, incorporation of two atoms of oxygen"/>
    <property type="evidence" value="ECO:0000318"/>
    <property type="project" value="GO_Central"/>
</dbReference>
<dbReference type="GO" id="GO:0006633">
    <property type="term" value="P:fatty acid biosynthetic process"/>
    <property type="evidence" value="ECO:0007669"/>
    <property type="project" value="UniProtKB-KW"/>
</dbReference>
<dbReference type="GO" id="GO:0034440">
    <property type="term" value="P:lipid oxidation"/>
    <property type="evidence" value="ECO:0000318"/>
    <property type="project" value="GO_Central"/>
</dbReference>
<dbReference type="GO" id="GO:0031408">
    <property type="term" value="P:oxylipin biosynthetic process"/>
    <property type="evidence" value="ECO:0007669"/>
    <property type="project" value="UniProtKB-UniPathway"/>
</dbReference>
<dbReference type="CDD" id="cd01751">
    <property type="entry name" value="PLAT_LH2"/>
    <property type="match status" value="1"/>
</dbReference>
<dbReference type="FunFam" id="1.20.245.10:FF:000002">
    <property type="entry name" value="Lipoxygenase"/>
    <property type="match status" value="1"/>
</dbReference>
<dbReference type="FunFam" id="3.10.450.60:FF:000002">
    <property type="entry name" value="Lipoxygenase"/>
    <property type="match status" value="1"/>
</dbReference>
<dbReference type="FunFam" id="4.10.375.10:FF:000001">
    <property type="entry name" value="Lipoxygenase"/>
    <property type="match status" value="1"/>
</dbReference>
<dbReference type="Gene3D" id="3.10.450.60">
    <property type="match status" value="1"/>
</dbReference>
<dbReference type="Gene3D" id="4.10.375.10">
    <property type="entry name" value="Lipoxygenase-1, Domain 2"/>
    <property type="match status" value="1"/>
</dbReference>
<dbReference type="Gene3D" id="4.10.372.10">
    <property type="entry name" value="Lipoxygenase-1, Domain 3"/>
    <property type="match status" value="1"/>
</dbReference>
<dbReference type="Gene3D" id="1.20.245.10">
    <property type="entry name" value="Lipoxygenase-1, Domain 5"/>
    <property type="match status" value="1"/>
</dbReference>
<dbReference type="Gene3D" id="2.60.60.20">
    <property type="entry name" value="PLAT/LH2 domain"/>
    <property type="match status" value="1"/>
</dbReference>
<dbReference type="InterPro" id="IPR000907">
    <property type="entry name" value="LipOase"/>
</dbReference>
<dbReference type="InterPro" id="IPR013819">
    <property type="entry name" value="LipOase_C"/>
</dbReference>
<dbReference type="InterPro" id="IPR036226">
    <property type="entry name" value="LipOase_C_sf"/>
</dbReference>
<dbReference type="InterPro" id="IPR020834">
    <property type="entry name" value="LipOase_CS"/>
</dbReference>
<dbReference type="InterPro" id="IPR020833">
    <property type="entry name" value="LipOase_Fe_BS"/>
</dbReference>
<dbReference type="InterPro" id="IPR001246">
    <property type="entry name" value="LipOase_plant"/>
</dbReference>
<dbReference type="InterPro" id="IPR042057">
    <property type="entry name" value="Lipoxy_PLAT/LH2"/>
</dbReference>
<dbReference type="InterPro" id="IPR027433">
    <property type="entry name" value="Lipoxygenase_dom_3"/>
</dbReference>
<dbReference type="InterPro" id="IPR001024">
    <property type="entry name" value="PLAT/LH2_dom"/>
</dbReference>
<dbReference type="InterPro" id="IPR036392">
    <property type="entry name" value="PLAT/LH2_dom_sf"/>
</dbReference>
<dbReference type="PANTHER" id="PTHR11771">
    <property type="entry name" value="LIPOXYGENASE"/>
    <property type="match status" value="1"/>
</dbReference>
<dbReference type="Pfam" id="PF00305">
    <property type="entry name" value="Lipoxygenase"/>
    <property type="match status" value="1"/>
</dbReference>
<dbReference type="Pfam" id="PF01477">
    <property type="entry name" value="PLAT"/>
    <property type="match status" value="1"/>
</dbReference>
<dbReference type="PRINTS" id="PR00087">
    <property type="entry name" value="LIPOXYGENASE"/>
</dbReference>
<dbReference type="PRINTS" id="PR00468">
    <property type="entry name" value="PLTLPOXGNASE"/>
</dbReference>
<dbReference type="SMART" id="SM00308">
    <property type="entry name" value="LH2"/>
    <property type="match status" value="1"/>
</dbReference>
<dbReference type="SUPFAM" id="SSF49723">
    <property type="entry name" value="Lipase/lipooxygenase domain (PLAT/LH2 domain)"/>
    <property type="match status" value="1"/>
</dbReference>
<dbReference type="SUPFAM" id="SSF48484">
    <property type="entry name" value="Lipoxigenase"/>
    <property type="match status" value="1"/>
</dbReference>
<dbReference type="PROSITE" id="PS00711">
    <property type="entry name" value="LIPOXYGENASE_1"/>
    <property type="match status" value="1"/>
</dbReference>
<dbReference type="PROSITE" id="PS00081">
    <property type="entry name" value="LIPOXYGENASE_2"/>
    <property type="match status" value="1"/>
</dbReference>
<dbReference type="PROSITE" id="PS51393">
    <property type="entry name" value="LIPOXYGENASE_3"/>
    <property type="match status" value="1"/>
</dbReference>
<dbReference type="PROSITE" id="PS50095">
    <property type="entry name" value="PLAT"/>
    <property type="match status" value="1"/>
</dbReference>
<evidence type="ECO:0000255" key="1">
    <source>
        <dbReference type="PROSITE-ProRule" id="PRU00152"/>
    </source>
</evidence>
<evidence type="ECO:0000255" key="2">
    <source>
        <dbReference type="PROSITE-ProRule" id="PRU00726"/>
    </source>
</evidence>
<evidence type="ECO:0000256" key="3">
    <source>
        <dbReference type="SAM" id="MobiDB-lite"/>
    </source>
</evidence>
<evidence type="ECO:0000305" key="4"/>
<comment type="function">
    <text>Plant lipoxygenase may be involved in a number of diverse aspects of plant physiology including growth and development, pest resistance, and senescence or responses to wounding. It catalyzes the hydroperoxidation of lipids containing a cis,cis-1,4-pentadiene structure.</text>
</comment>
<comment type="catalytic activity">
    <reaction>
        <text>(9Z,12Z)-octadecadienoate + O2 = (9S)-hydroperoxy-(10E,12Z)-octadecadienoate</text>
        <dbReference type="Rhea" id="RHEA:30291"/>
        <dbReference type="ChEBI" id="CHEBI:15379"/>
        <dbReference type="ChEBI" id="CHEBI:30245"/>
        <dbReference type="ChEBI" id="CHEBI:60955"/>
        <dbReference type="EC" id="1.13.11.58"/>
    </reaction>
</comment>
<comment type="cofactor">
    <cofactor evidence="2">
        <name>Fe cation</name>
        <dbReference type="ChEBI" id="CHEBI:24875"/>
    </cofactor>
    <text evidence="2">Binds 1 Fe cation per subunit. Iron is tightly bound.</text>
</comment>
<comment type="pathway">
    <text evidence="2">Lipid metabolism; oxylipin biosynthesis.</text>
</comment>
<comment type="subunit">
    <text>Monomer.</text>
</comment>
<comment type="subcellular location">
    <subcellularLocation>
        <location>Cytoplasm</location>
    </subcellularLocation>
</comment>
<comment type="tissue specificity">
    <text>Found in maturing and developing seeds. In young seedlings it is found in cotyledons, hypocotyls, roots and primary leaves.</text>
</comment>
<comment type="developmental stage">
    <text>Developmentally regulated. Expression is high 3 to 5 days after germination and returns to basal level by day 9.</text>
</comment>
<comment type="induction">
    <text>By pod removal and methyl jasmonate.</text>
</comment>
<comment type="similarity">
    <text evidence="4">Belongs to the lipoxygenase family.</text>
</comment>
<gene>
    <name type="primary">LOX1.5</name>
    <name type="synonym">LOX4</name>
</gene>
<name>LOX4_SOYBN</name>